<name>ATPE_PECCP</name>
<reference key="1">
    <citation type="submission" date="2009-07" db="EMBL/GenBank/DDBJ databases">
        <title>Complete sequence of Pectobacterium carotovorum subsp. carotovorum PC1.</title>
        <authorList>
            <consortium name="US DOE Joint Genome Institute"/>
            <person name="Lucas S."/>
            <person name="Copeland A."/>
            <person name="Lapidus A."/>
            <person name="Glavina del Rio T."/>
            <person name="Tice H."/>
            <person name="Bruce D."/>
            <person name="Goodwin L."/>
            <person name="Pitluck S."/>
            <person name="Munk A.C."/>
            <person name="Brettin T."/>
            <person name="Detter J.C."/>
            <person name="Han C."/>
            <person name="Tapia R."/>
            <person name="Larimer F."/>
            <person name="Land M."/>
            <person name="Hauser L."/>
            <person name="Kyrpides N."/>
            <person name="Mikhailova N."/>
            <person name="Balakrishnan V."/>
            <person name="Glasner J."/>
            <person name="Perna N.T."/>
        </authorList>
    </citation>
    <scope>NUCLEOTIDE SEQUENCE [LARGE SCALE GENOMIC DNA]</scope>
    <source>
        <strain>PC1</strain>
    </source>
</reference>
<feature type="chain" id="PRO_1000211787" description="ATP synthase epsilon chain">
    <location>
        <begin position="1"/>
        <end position="139"/>
    </location>
</feature>
<evidence type="ECO:0000255" key="1">
    <source>
        <dbReference type="HAMAP-Rule" id="MF_00530"/>
    </source>
</evidence>
<proteinExistence type="inferred from homology"/>
<sequence>MAMTYHLDVVSAEQQMFSGLVQKIQVTGSEGELGIYPGHAPLLTAIKPGMVRIVKQHGEEEYIYLSGGILEVQPNTVTVLSDTAIRGQDLDEARALEAKRKAEDHIRNSHGDVDYAQASAELSKAIAKLRVIELTRKAM</sequence>
<keyword id="KW-0066">ATP synthesis</keyword>
<keyword id="KW-0997">Cell inner membrane</keyword>
<keyword id="KW-1003">Cell membrane</keyword>
<keyword id="KW-0139">CF(1)</keyword>
<keyword id="KW-0375">Hydrogen ion transport</keyword>
<keyword id="KW-0406">Ion transport</keyword>
<keyword id="KW-0472">Membrane</keyword>
<keyword id="KW-0813">Transport</keyword>
<dbReference type="EMBL" id="CP001657">
    <property type="protein sequence ID" value="ACT15272.1"/>
    <property type="molecule type" value="Genomic_DNA"/>
</dbReference>
<dbReference type="RefSeq" id="WP_015842332.1">
    <property type="nucleotide sequence ID" value="NC_012917.1"/>
</dbReference>
<dbReference type="SMR" id="C6DJH3"/>
<dbReference type="STRING" id="561230.PC1_4258"/>
<dbReference type="KEGG" id="pct:PC1_4258"/>
<dbReference type="eggNOG" id="COG0355">
    <property type="taxonomic scope" value="Bacteria"/>
</dbReference>
<dbReference type="HOGENOM" id="CLU_084338_2_0_6"/>
<dbReference type="OrthoDB" id="9791445at2"/>
<dbReference type="Proteomes" id="UP000002736">
    <property type="component" value="Chromosome"/>
</dbReference>
<dbReference type="GO" id="GO:0005886">
    <property type="term" value="C:plasma membrane"/>
    <property type="evidence" value="ECO:0007669"/>
    <property type="project" value="UniProtKB-SubCell"/>
</dbReference>
<dbReference type="GO" id="GO:0045259">
    <property type="term" value="C:proton-transporting ATP synthase complex"/>
    <property type="evidence" value="ECO:0007669"/>
    <property type="project" value="UniProtKB-KW"/>
</dbReference>
<dbReference type="GO" id="GO:0005524">
    <property type="term" value="F:ATP binding"/>
    <property type="evidence" value="ECO:0007669"/>
    <property type="project" value="UniProtKB-UniRule"/>
</dbReference>
<dbReference type="GO" id="GO:0046933">
    <property type="term" value="F:proton-transporting ATP synthase activity, rotational mechanism"/>
    <property type="evidence" value="ECO:0007669"/>
    <property type="project" value="UniProtKB-UniRule"/>
</dbReference>
<dbReference type="CDD" id="cd12152">
    <property type="entry name" value="F1-ATPase_delta"/>
    <property type="match status" value="1"/>
</dbReference>
<dbReference type="FunFam" id="1.20.5.440:FF:000001">
    <property type="entry name" value="ATP synthase epsilon chain"/>
    <property type="match status" value="1"/>
</dbReference>
<dbReference type="FunFam" id="2.60.15.10:FF:000001">
    <property type="entry name" value="ATP synthase epsilon chain"/>
    <property type="match status" value="1"/>
</dbReference>
<dbReference type="Gene3D" id="1.20.5.440">
    <property type="entry name" value="ATP synthase delta/epsilon subunit, C-terminal domain"/>
    <property type="match status" value="1"/>
</dbReference>
<dbReference type="Gene3D" id="2.60.15.10">
    <property type="entry name" value="F0F1 ATP synthase delta/epsilon subunit, N-terminal"/>
    <property type="match status" value="1"/>
</dbReference>
<dbReference type="HAMAP" id="MF_00530">
    <property type="entry name" value="ATP_synth_epsil_bac"/>
    <property type="match status" value="1"/>
</dbReference>
<dbReference type="InterPro" id="IPR036794">
    <property type="entry name" value="ATP_F1_dsu/esu_C_sf"/>
</dbReference>
<dbReference type="InterPro" id="IPR001469">
    <property type="entry name" value="ATP_synth_F1_dsu/esu"/>
</dbReference>
<dbReference type="InterPro" id="IPR020546">
    <property type="entry name" value="ATP_synth_F1_dsu/esu_N"/>
</dbReference>
<dbReference type="InterPro" id="IPR020547">
    <property type="entry name" value="ATP_synth_F1_esu_C"/>
</dbReference>
<dbReference type="InterPro" id="IPR036771">
    <property type="entry name" value="ATPsynth_dsu/esu_N"/>
</dbReference>
<dbReference type="NCBIfam" id="TIGR01216">
    <property type="entry name" value="ATP_synt_epsi"/>
    <property type="match status" value="1"/>
</dbReference>
<dbReference type="NCBIfam" id="NF001847">
    <property type="entry name" value="PRK00571.1-4"/>
    <property type="match status" value="1"/>
</dbReference>
<dbReference type="PANTHER" id="PTHR13822">
    <property type="entry name" value="ATP SYNTHASE DELTA/EPSILON CHAIN"/>
    <property type="match status" value="1"/>
</dbReference>
<dbReference type="PANTHER" id="PTHR13822:SF10">
    <property type="entry name" value="ATP SYNTHASE EPSILON CHAIN, CHLOROPLASTIC"/>
    <property type="match status" value="1"/>
</dbReference>
<dbReference type="Pfam" id="PF00401">
    <property type="entry name" value="ATP-synt_DE"/>
    <property type="match status" value="1"/>
</dbReference>
<dbReference type="Pfam" id="PF02823">
    <property type="entry name" value="ATP-synt_DE_N"/>
    <property type="match status" value="1"/>
</dbReference>
<dbReference type="SUPFAM" id="SSF46604">
    <property type="entry name" value="Epsilon subunit of F1F0-ATP synthase C-terminal domain"/>
    <property type="match status" value="1"/>
</dbReference>
<dbReference type="SUPFAM" id="SSF51344">
    <property type="entry name" value="Epsilon subunit of F1F0-ATP synthase N-terminal domain"/>
    <property type="match status" value="1"/>
</dbReference>
<protein>
    <recommendedName>
        <fullName evidence="1">ATP synthase epsilon chain</fullName>
    </recommendedName>
    <alternativeName>
        <fullName evidence="1">ATP synthase F1 sector epsilon subunit</fullName>
    </alternativeName>
    <alternativeName>
        <fullName evidence="1">F-ATPase epsilon subunit</fullName>
    </alternativeName>
</protein>
<organism>
    <name type="scientific">Pectobacterium carotovorum subsp. carotovorum (strain PC1)</name>
    <dbReference type="NCBI Taxonomy" id="561230"/>
    <lineage>
        <taxon>Bacteria</taxon>
        <taxon>Pseudomonadati</taxon>
        <taxon>Pseudomonadota</taxon>
        <taxon>Gammaproteobacteria</taxon>
        <taxon>Enterobacterales</taxon>
        <taxon>Pectobacteriaceae</taxon>
        <taxon>Pectobacterium</taxon>
    </lineage>
</organism>
<gene>
    <name evidence="1" type="primary">atpC</name>
    <name type="ordered locus">PC1_4258</name>
</gene>
<comment type="function">
    <text evidence="1">Produces ATP from ADP in the presence of a proton gradient across the membrane.</text>
</comment>
<comment type="subunit">
    <text evidence="1">F-type ATPases have 2 components, CF(1) - the catalytic core - and CF(0) - the membrane proton channel. CF(1) has five subunits: alpha(3), beta(3), gamma(1), delta(1), epsilon(1). CF(0) has three main subunits: a, b and c.</text>
</comment>
<comment type="subcellular location">
    <subcellularLocation>
        <location evidence="1">Cell inner membrane</location>
        <topology evidence="1">Peripheral membrane protein</topology>
    </subcellularLocation>
</comment>
<comment type="similarity">
    <text evidence="1">Belongs to the ATPase epsilon chain family.</text>
</comment>
<accession>C6DJH3</accession>